<keyword id="KW-0067">ATP-binding</keyword>
<keyword id="KW-0436">Ligase</keyword>
<keyword id="KW-0547">Nucleotide-binding</keyword>
<keyword id="KW-0648">Protein biosynthesis</keyword>
<keyword id="KW-1185">Reference proteome</keyword>
<dbReference type="EC" id="6.3.5.7" evidence="1"/>
<dbReference type="EMBL" id="CP000240">
    <property type="protein sequence ID" value="ABD02567.1"/>
    <property type="molecule type" value="Genomic_DNA"/>
</dbReference>
<dbReference type="RefSeq" id="WP_011433212.1">
    <property type="nucleotide sequence ID" value="NC_007776.1"/>
</dbReference>
<dbReference type="SMR" id="Q2JL51"/>
<dbReference type="STRING" id="321332.CYB_1605"/>
<dbReference type="KEGG" id="cyb:CYB_1605"/>
<dbReference type="eggNOG" id="COG0154">
    <property type="taxonomic scope" value="Bacteria"/>
</dbReference>
<dbReference type="HOGENOM" id="CLU_009600_0_3_3"/>
<dbReference type="OrthoDB" id="9811471at2"/>
<dbReference type="Proteomes" id="UP000001938">
    <property type="component" value="Chromosome"/>
</dbReference>
<dbReference type="GO" id="GO:0030956">
    <property type="term" value="C:glutamyl-tRNA(Gln) amidotransferase complex"/>
    <property type="evidence" value="ECO:0007669"/>
    <property type="project" value="InterPro"/>
</dbReference>
<dbReference type="GO" id="GO:0005524">
    <property type="term" value="F:ATP binding"/>
    <property type="evidence" value="ECO:0007669"/>
    <property type="project" value="UniProtKB-KW"/>
</dbReference>
<dbReference type="GO" id="GO:0050567">
    <property type="term" value="F:glutaminyl-tRNA synthase (glutamine-hydrolyzing) activity"/>
    <property type="evidence" value="ECO:0007669"/>
    <property type="project" value="UniProtKB-UniRule"/>
</dbReference>
<dbReference type="GO" id="GO:0006412">
    <property type="term" value="P:translation"/>
    <property type="evidence" value="ECO:0007669"/>
    <property type="project" value="UniProtKB-UniRule"/>
</dbReference>
<dbReference type="Gene3D" id="3.90.1300.10">
    <property type="entry name" value="Amidase signature (AS) domain"/>
    <property type="match status" value="1"/>
</dbReference>
<dbReference type="HAMAP" id="MF_00120">
    <property type="entry name" value="GatA"/>
    <property type="match status" value="1"/>
</dbReference>
<dbReference type="InterPro" id="IPR000120">
    <property type="entry name" value="Amidase"/>
</dbReference>
<dbReference type="InterPro" id="IPR020556">
    <property type="entry name" value="Amidase_CS"/>
</dbReference>
<dbReference type="InterPro" id="IPR023631">
    <property type="entry name" value="Amidase_dom"/>
</dbReference>
<dbReference type="InterPro" id="IPR036928">
    <property type="entry name" value="AS_sf"/>
</dbReference>
<dbReference type="InterPro" id="IPR004412">
    <property type="entry name" value="GatA"/>
</dbReference>
<dbReference type="NCBIfam" id="TIGR00132">
    <property type="entry name" value="gatA"/>
    <property type="match status" value="1"/>
</dbReference>
<dbReference type="PANTHER" id="PTHR11895:SF151">
    <property type="entry name" value="GLUTAMYL-TRNA(GLN) AMIDOTRANSFERASE SUBUNIT A"/>
    <property type="match status" value="1"/>
</dbReference>
<dbReference type="PANTHER" id="PTHR11895">
    <property type="entry name" value="TRANSAMIDASE"/>
    <property type="match status" value="1"/>
</dbReference>
<dbReference type="Pfam" id="PF01425">
    <property type="entry name" value="Amidase"/>
    <property type="match status" value="1"/>
</dbReference>
<dbReference type="PIRSF" id="PIRSF001221">
    <property type="entry name" value="Amidase_fungi"/>
    <property type="match status" value="1"/>
</dbReference>
<dbReference type="SUPFAM" id="SSF75304">
    <property type="entry name" value="Amidase signature (AS) enzymes"/>
    <property type="match status" value="1"/>
</dbReference>
<dbReference type="PROSITE" id="PS00571">
    <property type="entry name" value="AMIDASES"/>
    <property type="match status" value="1"/>
</dbReference>
<accession>Q2JL51</accession>
<evidence type="ECO:0000255" key="1">
    <source>
        <dbReference type="HAMAP-Rule" id="MF_00120"/>
    </source>
</evidence>
<evidence type="ECO:0000256" key="2">
    <source>
        <dbReference type="SAM" id="MobiDB-lite"/>
    </source>
</evidence>
<sequence>MSVIRALHRQLVTKERSAEEIAREYLERLAQLEPQLKSFITVTEELALQQARAVDARIRAGEAIGPLAGIPLAVKDNLCTQGIRTTCASRMLEGFIPPYESTVTARLAAAGMVTVGKTNLDEFAMGSSTENSAFQRTANPWDLTRVPGGSSGGSAAAVAADQAVVALGSDTGGSIRQPAAFCGVVGLKPTYGLVSRYGLVAFASSLDQVGPFGRTVEDVALLLQGIAGHDPMDSTSLKVDIPDYSQALIPDIKGFKIGVIRDLLGEGCGEETRAAVQAAIQHLQELGAEILEIDCPSFRYGLATYYIIAPSEASANLARYDGVKYGLREPADSLLSMYGKTRAHGFGPEVKRRIMIGTYALSSGYYDAYYLKAQKVRTLIKQDFLKAFEKVDVLVSPTTPTPAFKLGEREDPLSMYLCDLMTIPVNLAGLPGLSLPCGFADGLPIGLQIVGNALQESKVLRVAYAYEQSTDWHKRRPPLGQPSVKEGQGSDPGQPQAKRRSGKRSKKSKS</sequence>
<feature type="chain" id="PRO_0000241165" description="Glutamyl-tRNA(Gln) amidotransferase subunit A">
    <location>
        <begin position="1"/>
        <end position="510"/>
    </location>
</feature>
<feature type="region of interest" description="Disordered" evidence="2">
    <location>
        <begin position="471"/>
        <end position="510"/>
    </location>
</feature>
<feature type="compositionally biased region" description="Basic residues" evidence="2">
    <location>
        <begin position="497"/>
        <end position="510"/>
    </location>
</feature>
<feature type="active site" description="Charge relay system" evidence="1">
    <location>
        <position position="75"/>
    </location>
</feature>
<feature type="active site" description="Charge relay system" evidence="1">
    <location>
        <position position="150"/>
    </location>
</feature>
<feature type="active site" description="Acyl-ester intermediate" evidence="1">
    <location>
        <position position="174"/>
    </location>
</feature>
<comment type="function">
    <text evidence="1">Allows the formation of correctly charged Gln-tRNA(Gln) through the transamidation of misacylated Glu-tRNA(Gln) in organisms which lack glutaminyl-tRNA synthetase. The reaction takes place in the presence of glutamine and ATP through an activated gamma-phospho-Glu-tRNA(Gln).</text>
</comment>
<comment type="catalytic activity">
    <reaction evidence="1">
        <text>L-glutamyl-tRNA(Gln) + L-glutamine + ATP + H2O = L-glutaminyl-tRNA(Gln) + L-glutamate + ADP + phosphate + H(+)</text>
        <dbReference type="Rhea" id="RHEA:17521"/>
        <dbReference type="Rhea" id="RHEA-COMP:9681"/>
        <dbReference type="Rhea" id="RHEA-COMP:9684"/>
        <dbReference type="ChEBI" id="CHEBI:15377"/>
        <dbReference type="ChEBI" id="CHEBI:15378"/>
        <dbReference type="ChEBI" id="CHEBI:29985"/>
        <dbReference type="ChEBI" id="CHEBI:30616"/>
        <dbReference type="ChEBI" id="CHEBI:43474"/>
        <dbReference type="ChEBI" id="CHEBI:58359"/>
        <dbReference type="ChEBI" id="CHEBI:78520"/>
        <dbReference type="ChEBI" id="CHEBI:78521"/>
        <dbReference type="ChEBI" id="CHEBI:456216"/>
        <dbReference type="EC" id="6.3.5.7"/>
    </reaction>
</comment>
<comment type="subunit">
    <text evidence="1">Heterotrimer of A, B and C subunits.</text>
</comment>
<comment type="similarity">
    <text evidence="1">Belongs to the amidase family. GatA subfamily.</text>
</comment>
<proteinExistence type="inferred from homology"/>
<protein>
    <recommendedName>
        <fullName evidence="1">Glutamyl-tRNA(Gln) amidotransferase subunit A</fullName>
        <shortName evidence="1">Glu-ADT subunit A</shortName>
        <ecNumber evidence="1">6.3.5.7</ecNumber>
    </recommendedName>
</protein>
<reference key="1">
    <citation type="journal article" date="2007" name="ISME J.">
        <title>Population level functional diversity in a microbial community revealed by comparative genomic and metagenomic analyses.</title>
        <authorList>
            <person name="Bhaya D."/>
            <person name="Grossman A.R."/>
            <person name="Steunou A.-S."/>
            <person name="Khuri N."/>
            <person name="Cohan F.M."/>
            <person name="Hamamura N."/>
            <person name="Melendrez M.C."/>
            <person name="Bateson M.M."/>
            <person name="Ward D.M."/>
            <person name="Heidelberg J.F."/>
        </authorList>
    </citation>
    <scope>NUCLEOTIDE SEQUENCE [LARGE SCALE GENOMIC DNA]</scope>
    <source>
        <strain>JA-2-3B'a(2-13)</strain>
    </source>
</reference>
<organism>
    <name type="scientific">Synechococcus sp. (strain JA-2-3B'a(2-13))</name>
    <name type="common">Cyanobacteria bacterium Yellowstone B-Prime</name>
    <dbReference type="NCBI Taxonomy" id="321332"/>
    <lineage>
        <taxon>Bacteria</taxon>
        <taxon>Bacillati</taxon>
        <taxon>Cyanobacteriota</taxon>
        <taxon>Cyanophyceae</taxon>
        <taxon>Synechococcales</taxon>
        <taxon>Synechococcaceae</taxon>
        <taxon>Synechococcus</taxon>
    </lineage>
</organism>
<name>GATA_SYNJB</name>
<gene>
    <name evidence="1" type="primary">gatA</name>
    <name type="ordered locus">CYB_1605</name>
</gene>